<proteinExistence type="inferred from homology"/>
<evidence type="ECO:0000250" key="1">
    <source>
        <dbReference type="UniProtKB" id="Q81FP2"/>
    </source>
</evidence>
<evidence type="ECO:0000250" key="2">
    <source>
        <dbReference type="UniProtKB" id="Q81WT0"/>
    </source>
</evidence>
<evidence type="ECO:0000269" key="3">
    <source>
    </source>
</evidence>
<evidence type="ECO:0000303" key="4">
    <source>
    </source>
</evidence>
<evidence type="ECO:0000305" key="5"/>
<keyword id="KW-0378">Hydrolase</keyword>
<keyword id="KW-0479">Metal-binding</keyword>
<keyword id="KW-1185">Reference proteome</keyword>
<keyword id="KW-0862">Zinc</keyword>
<accession>O31857</accession>
<accession>C0SP96</accession>
<accession>Q7BV97</accession>
<reference key="1">
    <citation type="journal article" date="1998" name="DNA Res.">
        <title>Sequence analysis of the Bacillus subtilis 168 chromosome region between the sspC and odhA loci (184 degrees-180 degrees).</title>
        <authorList>
            <person name="Ghim S.-Y."/>
            <person name="Choi S.-K."/>
            <person name="Shin B.-S."/>
            <person name="Jeong Y.-M."/>
            <person name="Sorokin A."/>
            <person name="Ehrlich S.D."/>
            <person name="Park S.-H."/>
        </authorList>
    </citation>
    <scope>NUCLEOTIDE SEQUENCE [GENOMIC DNA]</scope>
    <source>
        <strain>168</strain>
    </source>
</reference>
<reference key="2">
    <citation type="journal article" date="1997" name="Nature">
        <title>The complete genome sequence of the Gram-positive bacterium Bacillus subtilis.</title>
        <authorList>
            <person name="Kunst F."/>
            <person name="Ogasawara N."/>
            <person name="Moszer I."/>
            <person name="Albertini A.M."/>
            <person name="Alloni G."/>
            <person name="Azevedo V."/>
            <person name="Bertero M.G."/>
            <person name="Bessieres P."/>
            <person name="Bolotin A."/>
            <person name="Borchert S."/>
            <person name="Borriss R."/>
            <person name="Boursier L."/>
            <person name="Brans A."/>
            <person name="Braun M."/>
            <person name="Brignell S.C."/>
            <person name="Bron S."/>
            <person name="Brouillet S."/>
            <person name="Bruschi C.V."/>
            <person name="Caldwell B."/>
            <person name="Capuano V."/>
            <person name="Carter N.M."/>
            <person name="Choi S.-K."/>
            <person name="Codani J.-J."/>
            <person name="Connerton I.F."/>
            <person name="Cummings N.J."/>
            <person name="Daniel R.A."/>
            <person name="Denizot F."/>
            <person name="Devine K.M."/>
            <person name="Duesterhoeft A."/>
            <person name="Ehrlich S.D."/>
            <person name="Emmerson P.T."/>
            <person name="Entian K.-D."/>
            <person name="Errington J."/>
            <person name="Fabret C."/>
            <person name="Ferrari E."/>
            <person name="Foulger D."/>
            <person name="Fritz C."/>
            <person name="Fujita M."/>
            <person name="Fujita Y."/>
            <person name="Fuma S."/>
            <person name="Galizzi A."/>
            <person name="Galleron N."/>
            <person name="Ghim S.-Y."/>
            <person name="Glaser P."/>
            <person name="Goffeau A."/>
            <person name="Golightly E.J."/>
            <person name="Grandi G."/>
            <person name="Guiseppi G."/>
            <person name="Guy B.J."/>
            <person name="Haga K."/>
            <person name="Haiech J."/>
            <person name="Harwood C.R."/>
            <person name="Henaut A."/>
            <person name="Hilbert H."/>
            <person name="Holsappel S."/>
            <person name="Hosono S."/>
            <person name="Hullo M.-F."/>
            <person name="Itaya M."/>
            <person name="Jones L.-M."/>
            <person name="Joris B."/>
            <person name="Karamata D."/>
            <person name="Kasahara Y."/>
            <person name="Klaerr-Blanchard M."/>
            <person name="Klein C."/>
            <person name="Kobayashi Y."/>
            <person name="Koetter P."/>
            <person name="Koningstein G."/>
            <person name="Krogh S."/>
            <person name="Kumano M."/>
            <person name="Kurita K."/>
            <person name="Lapidus A."/>
            <person name="Lardinois S."/>
            <person name="Lauber J."/>
            <person name="Lazarevic V."/>
            <person name="Lee S.-M."/>
            <person name="Levine A."/>
            <person name="Liu H."/>
            <person name="Masuda S."/>
            <person name="Mauel C."/>
            <person name="Medigue C."/>
            <person name="Medina N."/>
            <person name="Mellado R.P."/>
            <person name="Mizuno M."/>
            <person name="Moestl D."/>
            <person name="Nakai S."/>
            <person name="Noback M."/>
            <person name="Noone D."/>
            <person name="O'Reilly M."/>
            <person name="Ogawa K."/>
            <person name="Ogiwara A."/>
            <person name="Oudega B."/>
            <person name="Park S.-H."/>
            <person name="Parro V."/>
            <person name="Pohl T.M."/>
            <person name="Portetelle D."/>
            <person name="Porwollik S."/>
            <person name="Prescott A.M."/>
            <person name="Presecan E."/>
            <person name="Pujic P."/>
            <person name="Purnelle B."/>
            <person name="Rapoport G."/>
            <person name="Rey M."/>
            <person name="Reynolds S."/>
            <person name="Rieger M."/>
            <person name="Rivolta C."/>
            <person name="Rocha E."/>
            <person name="Roche B."/>
            <person name="Rose M."/>
            <person name="Sadaie Y."/>
            <person name="Sato T."/>
            <person name="Scanlan E."/>
            <person name="Schleich S."/>
            <person name="Schroeter R."/>
            <person name="Scoffone F."/>
            <person name="Sekiguchi J."/>
            <person name="Sekowska A."/>
            <person name="Seror S.J."/>
            <person name="Serror P."/>
            <person name="Shin B.-S."/>
            <person name="Soldo B."/>
            <person name="Sorokin A."/>
            <person name="Tacconi E."/>
            <person name="Takagi T."/>
            <person name="Takahashi H."/>
            <person name="Takemaru K."/>
            <person name="Takeuchi M."/>
            <person name="Tamakoshi A."/>
            <person name="Tanaka T."/>
            <person name="Terpstra P."/>
            <person name="Tognoni A."/>
            <person name="Tosato V."/>
            <person name="Uchiyama S."/>
            <person name="Vandenbol M."/>
            <person name="Vannier F."/>
            <person name="Vassarotti A."/>
            <person name="Viari A."/>
            <person name="Wambutt R."/>
            <person name="Wedler E."/>
            <person name="Wedler H."/>
            <person name="Weitzenegger T."/>
            <person name="Winters P."/>
            <person name="Wipat A."/>
            <person name="Yamamoto H."/>
            <person name="Yamane K."/>
            <person name="Yasumoto K."/>
            <person name="Yata K."/>
            <person name="Yoshida K."/>
            <person name="Yoshikawa H.-F."/>
            <person name="Zumstein E."/>
            <person name="Yoshikawa H."/>
            <person name="Danchin A."/>
        </authorList>
    </citation>
    <scope>NUCLEOTIDE SEQUENCE [LARGE SCALE GENOMIC DNA]</scope>
    <source>
        <strain>168</strain>
    </source>
</reference>
<reference key="3">
    <citation type="journal article" date="2009" name="Microbiology">
        <title>From a consortium sequence to a unified sequence: the Bacillus subtilis 168 reference genome a decade later.</title>
        <authorList>
            <person name="Barbe V."/>
            <person name="Cruveiller S."/>
            <person name="Kunst F."/>
            <person name="Lenoble P."/>
            <person name="Meurice G."/>
            <person name="Sekowska A."/>
            <person name="Vallenet D."/>
            <person name="Wang T."/>
            <person name="Moszer I."/>
            <person name="Medigue C."/>
            <person name="Danchin A."/>
        </authorList>
    </citation>
    <scope>SEQUENCE REVISION TO N-TERMINUS</scope>
</reference>
<reference key="4">
    <citation type="journal article" date="2010" name="Proc. Natl. Acad. Sci. U.S.A.">
        <title>Biosynthesis and functions of bacillithiol, a major low-molecular-weight thiol in Bacilli.</title>
        <authorList>
            <person name="Gaballa A."/>
            <person name="Newton G.L."/>
            <person name="Antelmann H."/>
            <person name="Parsonage D."/>
            <person name="Upton H."/>
            <person name="Rawat M."/>
            <person name="Claiborne A."/>
            <person name="Fahey R.C."/>
            <person name="Helmann J.D."/>
        </authorList>
    </citation>
    <scope>DISRUPTION PHENOTYPE</scope>
    <source>
        <strain>168</strain>
    </source>
</reference>
<dbReference type="EC" id="3.5.1.-" evidence="2"/>
<dbReference type="EMBL" id="AF026147">
    <property type="protein sequence ID" value="AAC17855.1"/>
    <property type="status" value="ALT_FRAME"/>
    <property type="molecule type" value="Genomic_DNA"/>
</dbReference>
<dbReference type="EMBL" id="AL009126">
    <property type="protein sequence ID" value="CAB13838.2"/>
    <property type="molecule type" value="Genomic_DNA"/>
</dbReference>
<dbReference type="PIR" id="D69906">
    <property type="entry name" value="D69906"/>
</dbReference>
<dbReference type="RefSeq" id="WP_003231215.1">
    <property type="nucleotide sequence ID" value="NZ_OZ025638.1"/>
</dbReference>
<dbReference type="SMR" id="O31857"/>
<dbReference type="FunCoup" id="O31857">
    <property type="interactions" value="17"/>
</dbReference>
<dbReference type="STRING" id="224308.BSU19460"/>
<dbReference type="PaxDb" id="224308-BSU19460"/>
<dbReference type="EnsemblBacteria" id="CAB13838">
    <property type="protein sequence ID" value="CAB13838"/>
    <property type="gene ID" value="BSU_19460"/>
</dbReference>
<dbReference type="GeneID" id="2914250"/>
<dbReference type="KEGG" id="bsu:BSU19460"/>
<dbReference type="PATRIC" id="fig|224308.179.peg.2128"/>
<dbReference type="eggNOG" id="COG2120">
    <property type="taxonomic scope" value="Bacteria"/>
</dbReference>
<dbReference type="InParanoid" id="O31857"/>
<dbReference type="OrthoDB" id="9790023at2"/>
<dbReference type="PhylomeDB" id="O31857"/>
<dbReference type="BioCyc" id="BSUB:BSU19460-MONOMER"/>
<dbReference type="BioCyc" id="MetaCyc:BSU19460-MONOMER"/>
<dbReference type="Proteomes" id="UP000001570">
    <property type="component" value="Chromosome"/>
</dbReference>
<dbReference type="GO" id="GO:0016811">
    <property type="term" value="F:hydrolase activity, acting on carbon-nitrogen (but not peptide) bonds, in linear amides"/>
    <property type="evidence" value="ECO:0000318"/>
    <property type="project" value="GO_Central"/>
</dbReference>
<dbReference type="GO" id="GO:0046872">
    <property type="term" value="F:metal ion binding"/>
    <property type="evidence" value="ECO:0007669"/>
    <property type="project" value="UniProtKB-KW"/>
</dbReference>
<dbReference type="Gene3D" id="3.40.50.10320">
    <property type="entry name" value="LmbE-like"/>
    <property type="match status" value="1"/>
</dbReference>
<dbReference type="InterPro" id="IPR023841">
    <property type="entry name" value="BshB2"/>
</dbReference>
<dbReference type="InterPro" id="IPR003737">
    <property type="entry name" value="GlcNAc_PI_deacetylase-related"/>
</dbReference>
<dbReference type="InterPro" id="IPR024078">
    <property type="entry name" value="LmbE-like_dom_sf"/>
</dbReference>
<dbReference type="NCBIfam" id="TIGR04000">
    <property type="entry name" value="thiol_BshB2"/>
    <property type="match status" value="1"/>
</dbReference>
<dbReference type="PANTHER" id="PTHR12993:SF27">
    <property type="entry name" value="N-ACETYL-ALPHA-D-GLUCOSAMINYL L-MALATE DEACETYLASE 2-RELATED"/>
    <property type="match status" value="1"/>
</dbReference>
<dbReference type="PANTHER" id="PTHR12993">
    <property type="entry name" value="N-ACETYLGLUCOSAMINYL-PHOSPHATIDYLINOSITOL DE-N-ACETYLASE-RELATED"/>
    <property type="match status" value="1"/>
</dbReference>
<dbReference type="Pfam" id="PF02585">
    <property type="entry name" value="PIG-L"/>
    <property type="match status" value="1"/>
</dbReference>
<dbReference type="SUPFAM" id="SSF102588">
    <property type="entry name" value="LmbE-like"/>
    <property type="match status" value="1"/>
</dbReference>
<feature type="chain" id="PRO_0000386549" description="Probable N-acetyl-alpha-D-glucosaminyl L-malate deacetylase 2">
    <location>
        <begin position="1"/>
        <end position="221"/>
    </location>
</feature>
<feature type="binding site" evidence="1">
    <location>
        <position position="11"/>
    </location>
    <ligand>
        <name>Zn(2+)</name>
        <dbReference type="ChEBI" id="CHEBI:29105"/>
    </ligand>
</feature>
<feature type="binding site" evidence="1">
    <location>
        <position position="14"/>
    </location>
    <ligand>
        <name>Zn(2+)</name>
        <dbReference type="ChEBI" id="CHEBI:29105"/>
    </ligand>
</feature>
<feature type="binding site" evidence="1">
    <location>
        <position position="125"/>
    </location>
    <ligand>
        <name>Zn(2+)</name>
        <dbReference type="ChEBI" id="CHEBI:29105"/>
    </ligand>
</feature>
<organism>
    <name type="scientific">Bacillus subtilis (strain 168)</name>
    <dbReference type="NCBI Taxonomy" id="224308"/>
    <lineage>
        <taxon>Bacteria</taxon>
        <taxon>Bacillati</taxon>
        <taxon>Bacillota</taxon>
        <taxon>Bacilli</taxon>
        <taxon>Bacillales</taxon>
        <taxon>Bacillaceae</taxon>
        <taxon>Bacillus</taxon>
    </lineage>
</organism>
<protein>
    <recommendedName>
        <fullName evidence="5">Probable N-acetyl-alpha-D-glucosaminyl L-malate deacetylase 2</fullName>
        <shortName evidence="5">GlcNAc-Mal deacetylase 2</shortName>
        <ecNumber evidence="2">3.5.1.-</ecNumber>
    </recommendedName>
</protein>
<comment type="function">
    <text evidence="2">Involved in bacillithiol (BSH) biosynthesis. Catalyzes the second step of the pathway, the deacetylation of N-acetylglucosaminylmalate (GlcNAc-Mal) to glucosamine malate (GlcN-Mal).</text>
</comment>
<comment type="catalytic activity">
    <reaction evidence="2">
        <text>(S)-malyl N-acetyl-alpha-D-glucosaminide + H2O = (S)-malyl alpha-D-glucosaminide + acetate</text>
        <dbReference type="Rhea" id="RHEA:33411"/>
        <dbReference type="ChEBI" id="CHEBI:15377"/>
        <dbReference type="ChEBI" id="CHEBI:30089"/>
        <dbReference type="ChEBI" id="CHEBI:64870"/>
        <dbReference type="ChEBI" id="CHEBI:64871"/>
    </reaction>
</comment>
<comment type="cofactor">
    <cofactor evidence="1">
        <name>Zn(2+)</name>
        <dbReference type="ChEBI" id="CHEBI:29105"/>
    </cofactor>
</comment>
<comment type="disruption phenotype">
    <text evidence="3">Mutant has normal levels of bacillithiol, but bshB1/bshB2 double mutant does not produce bacillithiol.</text>
</comment>
<comment type="similarity">
    <text evidence="5">Belongs to the PIGL family.</text>
</comment>
<comment type="sequence caution" evidence="5">
    <conflict type="frameshift">
        <sequence resource="EMBL-CDS" id="AAC17855"/>
    </conflict>
</comment>
<gene>
    <name evidence="4" type="primary">bshB2</name>
    <name type="synonym">yojG</name>
    <name type="ordered locus">BSU19460</name>
</gene>
<name>BSHB2_BACSU</name>
<sequence>MKEHVLVILPHPDDESYGVAGLIALNRKKDIPVTYACATLGEMGRNMGDPFFANRETLPLLRKQELINACKEMDINDLRMLGLRDKTLEFEDDEYLADIMEEIIDDVKPSLIVTFYPGHGVHPDHDACGEAVIRALYRKKKEDRPRTICMAITRNREEVLGEADVVLDIKEVADIKMNALRAHRTQTEGMLRELEEKLKNNEPVMATWFEEEIYWTYQWND</sequence>